<protein>
    <recommendedName>
        <fullName evidence="1">Argininosuccinate lyase</fullName>
        <shortName evidence="1">ASAL</shortName>
        <ecNumber evidence="1">4.3.2.1</ecNumber>
    </recommendedName>
    <alternativeName>
        <fullName evidence="1">Arginosuccinase</fullName>
    </alternativeName>
</protein>
<proteinExistence type="inferred from homology"/>
<name>ARLY_POLNS</name>
<sequence>MSSSNNSLNNKAQAWSARFAEPVDELVQRYTASIGFDQRFAMVDIAGSLAHAEMLATQKIISAQDLADIQKGMAQIQSEIEAGQFEWQLALEDVHLNIEARLTQLVGDAGKRLHTGRSRNDQVATDLRLWLRGSVDEIALTLKSLRVALLDLAEKHASTIMPGHTHLQVAQPITFGHHLMAYFEMFSRDASRLADLRARFNRLPLGAAALAGTTYPINREQVAKALGFDGTCNNSLDAVSDRDFAIEFCAFASILMMHVSRLSEELILWLSPRFGFIDLPDRFCTGSSIMPQKKNPDVPELARGKTGRVYGDLISLLTLMKGQPLAYNKDDQEDKEPLFDAVDTVQDTLRIFADMVPHIEVKSEAMKKAAEEGFATATDLADYLVKKGLAFRDAHEAVAHAVKACVGRNCMLTDLSLSELRFACGLDNRPELIGDDVFVLLTVDGSVQSRQHAGGTAPAQVLAAIKRGRADL</sequence>
<feature type="chain" id="PRO_1000116338" description="Argininosuccinate lyase">
    <location>
        <begin position="1"/>
        <end position="472"/>
    </location>
</feature>
<gene>
    <name evidence="1" type="primary">argH</name>
    <name type="ordered locus">Pnec_1201</name>
</gene>
<accession>B1XVG9</accession>
<comment type="catalytic activity">
    <reaction evidence="1">
        <text>2-(N(omega)-L-arginino)succinate = fumarate + L-arginine</text>
        <dbReference type="Rhea" id="RHEA:24020"/>
        <dbReference type="ChEBI" id="CHEBI:29806"/>
        <dbReference type="ChEBI" id="CHEBI:32682"/>
        <dbReference type="ChEBI" id="CHEBI:57472"/>
        <dbReference type="EC" id="4.3.2.1"/>
    </reaction>
</comment>
<comment type="pathway">
    <text evidence="1">Amino-acid biosynthesis; L-arginine biosynthesis; L-arginine from L-ornithine and carbamoyl phosphate: step 3/3.</text>
</comment>
<comment type="subcellular location">
    <subcellularLocation>
        <location evidence="1">Cytoplasm</location>
    </subcellularLocation>
</comment>
<comment type="similarity">
    <text evidence="1">Belongs to the lyase 1 family. Argininosuccinate lyase subfamily.</text>
</comment>
<keyword id="KW-0028">Amino-acid biosynthesis</keyword>
<keyword id="KW-0055">Arginine biosynthesis</keyword>
<keyword id="KW-0963">Cytoplasm</keyword>
<keyword id="KW-0456">Lyase</keyword>
<organism>
    <name type="scientific">Polynucleobacter necessarius subsp. necessarius (strain STIR1)</name>
    <dbReference type="NCBI Taxonomy" id="452638"/>
    <lineage>
        <taxon>Bacteria</taxon>
        <taxon>Pseudomonadati</taxon>
        <taxon>Pseudomonadota</taxon>
        <taxon>Betaproteobacteria</taxon>
        <taxon>Burkholderiales</taxon>
        <taxon>Burkholderiaceae</taxon>
        <taxon>Polynucleobacter</taxon>
    </lineage>
</organism>
<reference key="1">
    <citation type="journal article" date="2013" name="Proc. Natl. Acad. Sci. U.S.A.">
        <title>Polynucleobacter necessarius, a model for genome reduction in both free-living and symbiotic bacteria.</title>
        <authorList>
            <person name="Boscaro V."/>
            <person name="Felletti M."/>
            <person name="Vannini C."/>
            <person name="Ackerman M.S."/>
            <person name="Chain P.S."/>
            <person name="Malfatti S."/>
            <person name="Vergez L.M."/>
            <person name="Shin M."/>
            <person name="Doak T.G."/>
            <person name="Lynch M."/>
            <person name="Petroni G."/>
        </authorList>
    </citation>
    <scope>NUCLEOTIDE SEQUENCE [LARGE SCALE GENOMIC DNA]</scope>
    <source>
        <strain>STIR1</strain>
    </source>
</reference>
<dbReference type="EC" id="4.3.2.1" evidence="1"/>
<dbReference type="EMBL" id="CP001010">
    <property type="protein sequence ID" value="ACB44346.1"/>
    <property type="molecule type" value="Genomic_DNA"/>
</dbReference>
<dbReference type="SMR" id="B1XVG9"/>
<dbReference type="STRING" id="452638.Pnec_1201"/>
<dbReference type="KEGG" id="pne:Pnec_1201"/>
<dbReference type="eggNOG" id="COG0165">
    <property type="taxonomic scope" value="Bacteria"/>
</dbReference>
<dbReference type="HOGENOM" id="CLU_027272_2_3_4"/>
<dbReference type="OrthoDB" id="9769623at2"/>
<dbReference type="UniPathway" id="UPA00068">
    <property type="reaction ID" value="UER00114"/>
</dbReference>
<dbReference type="GO" id="GO:0005829">
    <property type="term" value="C:cytosol"/>
    <property type="evidence" value="ECO:0007669"/>
    <property type="project" value="TreeGrafter"/>
</dbReference>
<dbReference type="GO" id="GO:0004056">
    <property type="term" value="F:argininosuccinate lyase activity"/>
    <property type="evidence" value="ECO:0007669"/>
    <property type="project" value="UniProtKB-UniRule"/>
</dbReference>
<dbReference type="GO" id="GO:0042450">
    <property type="term" value="P:arginine biosynthetic process via ornithine"/>
    <property type="evidence" value="ECO:0007669"/>
    <property type="project" value="InterPro"/>
</dbReference>
<dbReference type="GO" id="GO:0006526">
    <property type="term" value="P:L-arginine biosynthetic process"/>
    <property type="evidence" value="ECO:0007669"/>
    <property type="project" value="UniProtKB-UniRule"/>
</dbReference>
<dbReference type="CDD" id="cd01359">
    <property type="entry name" value="Argininosuccinate_lyase"/>
    <property type="match status" value="1"/>
</dbReference>
<dbReference type="FunFam" id="1.10.275.10:FF:000002">
    <property type="entry name" value="Argininosuccinate lyase"/>
    <property type="match status" value="1"/>
</dbReference>
<dbReference type="FunFam" id="1.10.40.30:FF:000001">
    <property type="entry name" value="Argininosuccinate lyase"/>
    <property type="match status" value="1"/>
</dbReference>
<dbReference type="FunFam" id="1.20.200.10:FF:000015">
    <property type="entry name" value="argininosuccinate lyase isoform X2"/>
    <property type="match status" value="1"/>
</dbReference>
<dbReference type="Gene3D" id="1.10.40.30">
    <property type="entry name" value="Fumarase/aspartase (C-terminal domain)"/>
    <property type="match status" value="1"/>
</dbReference>
<dbReference type="Gene3D" id="1.20.200.10">
    <property type="entry name" value="Fumarase/aspartase (Central domain)"/>
    <property type="match status" value="1"/>
</dbReference>
<dbReference type="Gene3D" id="1.10.275.10">
    <property type="entry name" value="Fumarase/aspartase (N-terminal domain)"/>
    <property type="match status" value="1"/>
</dbReference>
<dbReference type="HAMAP" id="MF_00006">
    <property type="entry name" value="Arg_succ_lyase"/>
    <property type="match status" value="1"/>
</dbReference>
<dbReference type="InterPro" id="IPR029419">
    <property type="entry name" value="Arg_succ_lyase_C"/>
</dbReference>
<dbReference type="InterPro" id="IPR009049">
    <property type="entry name" value="Argininosuccinate_lyase"/>
</dbReference>
<dbReference type="InterPro" id="IPR024083">
    <property type="entry name" value="Fumarase/histidase_N"/>
</dbReference>
<dbReference type="InterPro" id="IPR020557">
    <property type="entry name" value="Fumarate_lyase_CS"/>
</dbReference>
<dbReference type="InterPro" id="IPR000362">
    <property type="entry name" value="Fumarate_lyase_fam"/>
</dbReference>
<dbReference type="InterPro" id="IPR022761">
    <property type="entry name" value="Fumarate_lyase_N"/>
</dbReference>
<dbReference type="InterPro" id="IPR008948">
    <property type="entry name" value="L-Aspartase-like"/>
</dbReference>
<dbReference type="NCBIfam" id="TIGR00838">
    <property type="entry name" value="argH"/>
    <property type="match status" value="1"/>
</dbReference>
<dbReference type="PANTHER" id="PTHR43814">
    <property type="entry name" value="ARGININOSUCCINATE LYASE"/>
    <property type="match status" value="1"/>
</dbReference>
<dbReference type="PANTHER" id="PTHR43814:SF1">
    <property type="entry name" value="ARGININOSUCCINATE LYASE"/>
    <property type="match status" value="1"/>
</dbReference>
<dbReference type="Pfam" id="PF14698">
    <property type="entry name" value="ASL_C2"/>
    <property type="match status" value="1"/>
</dbReference>
<dbReference type="Pfam" id="PF00206">
    <property type="entry name" value="Lyase_1"/>
    <property type="match status" value="1"/>
</dbReference>
<dbReference type="PRINTS" id="PR00145">
    <property type="entry name" value="ARGSUCLYASE"/>
</dbReference>
<dbReference type="PRINTS" id="PR00149">
    <property type="entry name" value="FUMRATELYASE"/>
</dbReference>
<dbReference type="SUPFAM" id="SSF48557">
    <property type="entry name" value="L-aspartase-like"/>
    <property type="match status" value="1"/>
</dbReference>
<dbReference type="PROSITE" id="PS00163">
    <property type="entry name" value="FUMARATE_LYASES"/>
    <property type="match status" value="1"/>
</dbReference>
<evidence type="ECO:0000255" key="1">
    <source>
        <dbReference type="HAMAP-Rule" id="MF_00006"/>
    </source>
</evidence>